<name>S47A2_HUMAN</name>
<protein>
    <recommendedName>
        <fullName>Multidrug and toxin extrusion protein 2</fullName>
        <shortName>MATE-2</shortName>
        <shortName>hMATE-2</shortName>
    </recommendedName>
    <alternativeName>
        <fullName>Kidney-specific H(+)/organic cation antiporter</fullName>
    </alternativeName>
    <alternativeName>
        <fullName>Solute carrier family 47 member 2</fullName>
    </alternativeName>
</protein>
<keyword id="KW-0025">Alternative splicing</keyword>
<keyword id="KW-0050">Antiport</keyword>
<keyword id="KW-1003">Cell membrane</keyword>
<keyword id="KW-0472">Membrane</keyword>
<keyword id="KW-1267">Proteomics identification</keyword>
<keyword id="KW-1185">Reference proteome</keyword>
<keyword id="KW-0812">Transmembrane</keyword>
<keyword id="KW-1133">Transmembrane helix</keyword>
<keyword id="KW-0813">Transport</keyword>
<proteinExistence type="evidence at protein level"/>
<accession>Q86VL8</accession>
<accession>A0JBX9</accession>
<accession>A0P8Z7</accession>
<accession>Q63HJ9</accession>
<accession>Q8IV44</accession>
<accession>Q96NA1</accession>
<dbReference type="EMBL" id="AB250364">
    <property type="protein sequence ID" value="BAF36847.1"/>
    <property type="molecule type" value="mRNA"/>
</dbReference>
<dbReference type="EMBL" id="AB250701">
    <property type="protein sequence ID" value="BAF37007.1"/>
    <property type="molecule type" value="mRNA"/>
</dbReference>
<dbReference type="EMBL" id="AK055758">
    <property type="status" value="NOT_ANNOTATED_CDS"/>
    <property type="molecule type" value="mRNA"/>
</dbReference>
<dbReference type="EMBL" id="BX648861">
    <property type="protein sequence ID" value="CAH56154.1"/>
    <property type="molecule type" value="mRNA"/>
</dbReference>
<dbReference type="EMBL" id="CH471212">
    <property type="protein sequence ID" value="EAW50902.1"/>
    <property type="molecule type" value="Genomic_DNA"/>
</dbReference>
<dbReference type="EMBL" id="CH471212">
    <property type="protein sequence ID" value="EAW50904.1"/>
    <property type="molecule type" value="Genomic_DNA"/>
</dbReference>
<dbReference type="EMBL" id="CH471212">
    <property type="protein sequence ID" value="EAW50905.1"/>
    <property type="molecule type" value="Genomic_DNA"/>
</dbReference>
<dbReference type="EMBL" id="BC035288">
    <property type="protein sequence ID" value="AAH35288.1"/>
    <property type="molecule type" value="mRNA"/>
</dbReference>
<dbReference type="EMBL" id="BC050578">
    <property type="protein sequence ID" value="AAH50578.1"/>
    <property type="molecule type" value="mRNA"/>
</dbReference>
<dbReference type="CCDS" id="CCDS11211.1">
    <molecule id="Q86VL8-1"/>
</dbReference>
<dbReference type="CCDS" id="CCDS58530.1">
    <molecule id="Q86VL8-4"/>
</dbReference>
<dbReference type="CCDS" id="CCDS92273.1">
    <molecule id="Q86VL8-3"/>
</dbReference>
<dbReference type="RefSeq" id="NP_001093116.1">
    <molecule id="Q86VL8-3"/>
    <property type="nucleotide sequence ID" value="NM_001099646.3"/>
</dbReference>
<dbReference type="RefSeq" id="NP_001243592.1">
    <molecule id="Q86VL8-4"/>
    <property type="nucleotide sequence ID" value="NM_001256663.3"/>
</dbReference>
<dbReference type="RefSeq" id="NP_690872.2">
    <molecule id="Q86VL8-1"/>
    <property type="nucleotide sequence ID" value="NM_152908.3"/>
</dbReference>
<dbReference type="SMR" id="Q86VL8"/>
<dbReference type="BioGRID" id="127012">
    <property type="interactions" value="4"/>
</dbReference>
<dbReference type="FunCoup" id="Q86VL8">
    <property type="interactions" value="130"/>
</dbReference>
<dbReference type="IntAct" id="Q86VL8">
    <property type="interactions" value="2"/>
</dbReference>
<dbReference type="MINT" id="Q86VL8"/>
<dbReference type="STRING" id="9606.ENSP00000326671"/>
<dbReference type="BindingDB" id="Q86VL8"/>
<dbReference type="ChEMBL" id="CHEMBL1743127"/>
<dbReference type="DrugBank" id="DB12001">
    <property type="generic name" value="Abemaciclib"/>
</dbReference>
<dbReference type="DrugBank" id="DB00787">
    <property type="generic name" value="Acyclovir"/>
</dbReference>
<dbReference type="DrugBank" id="DB06288">
    <property type="generic name" value="Amisulpride"/>
</dbReference>
<dbReference type="DrugBank" id="DB11901">
    <property type="generic name" value="Apalutamide"/>
</dbReference>
<dbReference type="DrugBank" id="DB05025">
    <property type="generic name" value="Arimoclomol"/>
</dbReference>
<dbReference type="DrugBank" id="DB15233">
    <property type="generic name" value="Avapritinib"/>
</dbReference>
<dbReference type="DrugBank" id="DB11817">
    <property type="generic name" value="Baricitinib"/>
</dbReference>
<dbReference type="DrugBank" id="DB15463">
    <property type="generic name" value="Belzutifan"/>
</dbReference>
<dbReference type="DrugBank" id="DB09128">
    <property type="generic name" value="Brexpiprazole"/>
</dbReference>
<dbReference type="DrugBank" id="DB12267">
    <property type="generic name" value="Brigatinib"/>
</dbReference>
<dbReference type="DrugBank" id="DB12218">
    <property type="generic name" value="Capivasertib"/>
</dbReference>
<dbReference type="DrugBank" id="DB11791">
    <property type="generic name" value="Capmatinib"/>
</dbReference>
<dbReference type="DrugBank" id="DB00501">
    <property type="generic name" value="Cimetidine"/>
</dbReference>
<dbReference type="DrugBank" id="DB00537">
    <property type="generic name" value="Ciprofloxacin"/>
</dbReference>
<dbReference type="DrugBank" id="DB12483">
    <property type="generic name" value="Copanlisib"/>
</dbReference>
<dbReference type="DrugBank" id="DB18847">
    <property type="generic name" value="Deuruxolitinib"/>
</dbReference>
<dbReference type="DrugBank" id="DB04574">
    <property type="generic name" value="Estrone sulfate"/>
</dbReference>
<dbReference type="DrugBank" id="DB12500">
    <property type="generic name" value="Fedratinib"/>
</dbReference>
<dbReference type="DrugBank" id="DB12265">
    <property type="generic name" value="Fexinidazole"/>
</dbReference>
<dbReference type="DrugBank" id="DB16628">
    <property type="generic name" value="Fosdenopterin"/>
</dbReference>
<dbReference type="DrugBank" id="DB01004">
    <property type="generic name" value="Ganciclovir"/>
</dbReference>
<dbReference type="DrugBank" id="DB15097">
    <property type="generic name" value="Gefapixant"/>
</dbReference>
<dbReference type="DrugBank" id="DB11978">
    <property type="generic name" value="Glasdegib"/>
</dbReference>
<dbReference type="DrugBank" id="DB00536">
    <property type="generic name" value="Guanidine"/>
</dbReference>
<dbReference type="DrugBank" id="DB11886">
    <property type="generic name" value="Infigratinib"/>
</dbReference>
<dbReference type="DrugBank" id="DB11757">
    <property type="generic name" value="Istradefylline"/>
</dbReference>
<dbReference type="DrugBank" id="DB11732">
    <property type="generic name" value="Lasmiditan"/>
</dbReference>
<dbReference type="DrugBank" id="DB01137">
    <property type="generic name" value="Levofloxacin"/>
</dbReference>
<dbReference type="DrugBank" id="DB00331">
    <property type="generic name" value="Metformin"/>
</dbReference>
<dbReference type="DrugBank" id="DB09241">
    <property type="generic name" value="Methylene blue"/>
</dbReference>
<dbReference type="DrugBank" id="DB08840">
    <property type="generic name" value="N-methylnicotinamide"/>
</dbReference>
<dbReference type="DrugBank" id="DB01203">
    <property type="generic name" value="Nadolol"/>
</dbReference>
<dbReference type="DrugBank" id="DB11793">
    <property type="generic name" value="Niraparib"/>
</dbReference>
<dbReference type="DrugBank" id="DB16267">
    <property type="generic name" value="Olutasidenib"/>
</dbReference>
<dbReference type="DrugBank" id="DB12978">
    <property type="generic name" value="Pexidartinib"/>
</dbReference>
<dbReference type="DrugBank" id="DB12615">
    <property type="generic name" value="Plazomicin"/>
</dbReference>
<dbReference type="DrugBank" id="DB15822">
    <property type="generic name" value="Pralsetinib"/>
</dbReference>
<dbReference type="DrugBank" id="DB01035">
    <property type="generic name" value="Procainamide"/>
</dbReference>
<dbReference type="DrugBank" id="DB00205">
    <property type="generic name" value="Pyrimethamine"/>
</dbReference>
<dbReference type="DrugBank" id="DB00243">
    <property type="generic name" value="Ranolazine"/>
</dbReference>
<dbReference type="DrugBank" id="DB12377">
    <property type="generic name" value="Relebactam"/>
</dbReference>
<dbReference type="DrugBank" id="DB16826">
    <property type="generic name" value="Repotrectinib"/>
</dbReference>
<dbReference type="DrugBank" id="DB15305">
    <property type="generic name" value="Risdiplam"/>
</dbReference>
<dbReference type="DrugBank" id="DB12332">
    <property type="generic name" value="Rucaparib"/>
</dbReference>
<dbReference type="DrugBank" id="DB00391">
    <property type="generic name" value="Sulpiride"/>
</dbReference>
<dbReference type="DrugBank" id="DB06608">
    <property type="generic name" value="Tafenoquine"/>
</dbReference>
<dbReference type="DrugBank" id="DB12887">
    <property type="generic name" value="Tazemetostat"/>
</dbReference>
<dbReference type="DrugBank" id="DB15133">
    <property type="generic name" value="Tepotinib"/>
</dbReference>
<dbReference type="DrugBank" id="DB06137">
    <property type="generic name" value="Tirbanibulin"/>
</dbReference>
<dbReference type="DrugBank" id="DB01030">
    <property type="generic name" value="Topotecan"/>
</dbReference>
<dbReference type="DrugBank" id="DB14962">
    <property type="generic name" value="Trastuzumab deruxtecan"/>
</dbReference>
<dbReference type="DrugBank" id="DB15442">
    <property type="generic name" value="Trilaciclib"/>
</dbReference>
<dbReference type="DrugBank" id="DB00440">
    <property type="generic name" value="Trimethoprim"/>
</dbReference>
<dbReference type="DrugBank" id="DB11652">
    <property type="generic name" value="Tucatinib"/>
</dbReference>
<dbReference type="DrugBank" id="DB00661">
    <property type="generic name" value="Verapamil"/>
</dbReference>
<dbReference type="DrugBank" id="DB15688">
    <property type="generic name" value="Zavegepant"/>
</dbReference>
<dbReference type="DrugCentral" id="Q86VL8"/>
<dbReference type="GuidetoPHARMACOLOGY" id="1217"/>
<dbReference type="TCDB" id="2.A.66.1.20">
    <property type="family name" value="the multidrug/oligosaccharidyl-lipid/polysaccharide (mop) flippase superfamily"/>
</dbReference>
<dbReference type="iPTMnet" id="Q86VL8"/>
<dbReference type="PhosphoSitePlus" id="Q86VL8"/>
<dbReference type="BioMuta" id="SLC47A2"/>
<dbReference type="DMDM" id="74727585"/>
<dbReference type="MassIVE" id="Q86VL8"/>
<dbReference type="PaxDb" id="9606-ENSP00000326671"/>
<dbReference type="PeptideAtlas" id="Q86VL8"/>
<dbReference type="ProteomicsDB" id="70034">
    <molecule id="Q86VL8-1"/>
</dbReference>
<dbReference type="ProteomicsDB" id="70036">
    <molecule id="Q86VL8-3"/>
</dbReference>
<dbReference type="ProteomicsDB" id="70037">
    <molecule id="Q86VL8-4"/>
</dbReference>
<dbReference type="Antibodypedia" id="26005">
    <property type="antibodies" value="159 antibodies from 24 providers"/>
</dbReference>
<dbReference type="DNASU" id="146802"/>
<dbReference type="Ensembl" id="ENST00000325411.9">
    <molecule id="Q86VL8-1"/>
    <property type="protein sequence ID" value="ENSP00000326671.5"/>
    <property type="gene ID" value="ENSG00000180638.19"/>
</dbReference>
<dbReference type="Ensembl" id="ENST00000350657.9">
    <molecule id="Q86VL8-4"/>
    <property type="protein sequence ID" value="ENSP00000338084.6"/>
    <property type="gene ID" value="ENSG00000180638.19"/>
</dbReference>
<dbReference type="Ensembl" id="ENST00000433844.4">
    <molecule id="Q86VL8-3"/>
    <property type="protein sequence ID" value="ENSP00000391848.3"/>
    <property type="gene ID" value="ENSG00000180638.19"/>
</dbReference>
<dbReference type="Ensembl" id="ENST00000574239.5">
    <molecule id="Q86VL8-6"/>
    <property type="protein sequence ID" value="ENSP00000458694.1"/>
    <property type="gene ID" value="ENSG00000180638.19"/>
</dbReference>
<dbReference type="GeneID" id="146802"/>
<dbReference type="KEGG" id="hsa:146802"/>
<dbReference type="MANE-Select" id="ENST00000433844.4">
    <molecule id="Q86VL8-3"/>
    <property type="protein sequence ID" value="ENSP00000391848.3"/>
    <property type="RefSeq nucleotide sequence ID" value="NM_001099646.3"/>
    <property type="RefSeq protein sequence ID" value="NP_001093116.1"/>
</dbReference>
<dbReference type="UCSC" id="uc002gwe.5">
    <molecule id="Q86VL8-1"/>
    <property type="organism name" value="human"/>
</dbReference>
<dbReference type="AGR" id="HGNC:26439"/>
<dbReference type="CTD" id="146802"/>
<dbReference type="DisGeNET" id="146802"/>
<dbReference type="GeneCards" id="SLC47A2"/>
<dbReference type="HGNC" id="HGNC:26439">
    <property type="gene designation" value="SLC47A2"/>
</dbReference>
<dbReference type="HPA" id="ENSG00000180638">
    <property type="expression patterns" value="Group enriched (choroid plexus, kidney)"/>
</dbReference>
<dbReference type="MIM" id="609833">
    <property type="type" value="gene"/>
</dbReference>
<dbReference type="neXtProt" id="NX_Q86VL8"/>
<dbReference type="OpenTargets" id="ENSG00000180638"/>
<dbReference type="PharmGKB" id="PA162403847"/>
<dbReference type="VEuPathDB" id="HostDB:ENSG00000180638"/>
<dbReference type="eggNOG" id="KOG1347">
    <property type="taxonomic scope" value="Eukaryota"/>
</dbReference>
<dbReference type="GeneTree" id="ENSGT00940000163062"/>
<dbReference type="HOGENOM" id="CLU_012893_1_3_1"/>
<dbReference type="InParanoid" id="Q86VL8"/>
<dbReference type="OMA" id="EFWILLK"/>
<dbReference type="OrthoDB" id="2126698at2759"/>
<dbReference type="PAN-GO" id="Q86VL8">
    <property type="GO annotations" value="2 GO annotations based on evolutionary models"/>
</dbReference>
<dbReference type="PhylomeDB" id="Q86VL8"/>
<dbReference type="TreeFam" id="TF324441"/>
<dbReference type="PathwayCommons" id="Q86VL8"/>
<dbReference type="Reactome" id="R-HSA-425366">
    <property type="pathway name" value="Transport of bile salts and organic acids, metal ions and amine compounds"/>
</dbReference>
<dbReference type="SignaLink" id="Q86VL8"/>
<dbReference type="BioGRID-ORCS" id="146802">
    <property type="hits" value="11 hits in 1140 CRISPR screens"/>
</dbReference>
<dbReference type="GeneWiki" id="SLC47A2"/>
<dbReference type="GenomeRNAi" id="146802"/>
<dbReference type="Pharos" id="Q86VL8">
    <property type="development level" value="Tchem"/>
</dbReference>
<dbReference type="PRO" id="PR:Q86VL8"/>
<dbReference type="Proteomes" id="UP000005640">
    <property type="component" value="Chromosome 17"/>
</dbReference>
<dbReference type="RNAct" id="Q86VL8">
    <property type="molecule type" value="protein"/>
</dbReference>
<dbReference type="Bgee" id="ENSG00000180638">
    <property type="expression patterns" value="Expressed in kidney epithelium and 108 other cell types or tissues"/>
</dbReference>
<dbReference type="ExpressionAtlas" id="Q86VL8">
    <property type="expression patterns" value="baseline and differential"/>
</dbReference>
<dbReference type="GO" id="GO:0016324">
    <property type="term" value="C:apical plasma membrane"/>
    <property type="evidence" value="ECO:0007669"/>
    <property type="project" value="UniProtKB-SubCell"/>
</dbReference>
<dbReference type="GO" id="GO:0016020">
    <property type="term" value="C:membrane"/>
    <property type="evidence" value="ECO:0000318"/>
    <property type="project" value="GO_Central"/>
</dbReference>
<dbReference type="GO" id="GO:0005886">
    <property type="term" value="C:plasma membrane"/>
    <property type="evidence" value="ECO:0000314"/>
    <property type="project" value="UniProtKB"/>
</dbReference>
<dbReference type="GO" id="GO:0015297">
    <property type="term" value="F:antiporter activity"/>
    <property type="evidence" value="ECO:0000314"/>
    <property type="project" value="UniProtKB"/>
</dbReference>
<dbReference type="GO" id="GO:0015101">
    <property type="term" value="F:organic cation transmembrane transporter activity"/>
    <property type="evidence" value="ECO:0000314"/>
    <property type="project" value="UniProtKB"/>
</dbReference>
<dbReference type="GO" id="GO:0140968">
    <property type="term" value="F:polyspecific organic cation:proton antiporter activity"/>
    <property type="evidence" value="ECO:0000314"/>
    <property type="project" value="UniProtKB"/>
</dbReference>
<dbReference type="GO" id="GO:0022857">
    <property type="term" value="F:transmembrane transporter activity"/>
    <property type="evidence" value="ECO:0000318"/>
    <property type="project" value="GO_Central"/>
</dbReference>
<dbReference type="GO" id="GO:0042910">
    <property type="term" value="F:xenobiotic transmembrane transporter activity"/>
    <property type="evidence" value="ECO:0007669"/>
    <property type="project" value="InterPro"/>
</dbReference>
<dbReference type="GO" id="GO:0015695">
    <property type="term" value="P:organic cation transport"/>
    <property type="evidence" value="ECO:0000314"/>
    <property type="project" value="UniProtKB"/>
</dbReference>
<dbReference type="GO" id="GO:0055085">
    <property type="term" value="P:transmembrane transport"/>
    <property type="evidence" value="ECO:0000304"/>
    <property type="project" value="Reactome"/>
</dbReference>
<dbReference type="GO" id="GO:1990961">
    <property type="term" value="P:xenobiotic detoxification by transmembrane export across the plasma membrane"/>
    <property type="evidence" value="ECO:0007669"/>
    <property type="project" value="InterPro"/>
</dbReference>
<dbReference type="CDD" id="cd13132">
    <property type="entry name" value="MATE_eukaryotic"/>
    <property type="match status" value="1"/>
</dbReference>
<dbReference type="InterPro" id="IPR045069">
    <property type="entry name" value="MATE_euk"/>
</dbReference>
<dbReference type="InterPro" id="IPR002528">
    <property type="entry name" value="MATE_fam"/>
</dbReference>
<dbReference type="NCBIfam" id="TIGR00797">
    <property type="entry name" value="matE"/>
    <property type="match status" value="1"/>
</dbReference>
<dbReference type="PANTHER" id="PTHR11206">
    <property type="entry name" value="MULTIDRUG RESISTANCE PROTEIN"/>
    <property type="match status" value="1"/>
</dbReference>
<dbReference type="Pfam" id="PF01554">
    <property type="entry name" value="MatE"/>
    <property type="match status" value="2"/>
</dbReference>
<sequence>MDSLQDTVALDHGGCCPALSRLVPRGFGTEMWTLFALSGPLFLFQVLTFMIYIVSTVFCGHLGKVELASVTLAVAFVNVCGVSVGVGLSSACDTLMSQSFGSPNKKHVGVILQRGALVLLLCCLPCWALFLNTQHILLLFRQDPDVSRLTQDYVMIFIPGLPVIFLYNLLAKYLQNQGWLKGQEEESPFQTPGLSILHPSHSHLSRASFHLFQKITWPQVLSGVVGNCVNGVANYALVSVLNLGVRGSAYANIISQFAQTVFLLLYIVLKKLHLETWAGWSSQCLQDWGPFFSLAVPSMLMICVEWWAYEIGSFLMGLLSVVDLSAQAVIYEVATVTYMIPLGLSIGVCVRVGMALGAADTVQAKRSAVSGVLSIVGISLVLGTLISILKNQLGHIFTNDEDVIALVSQVLPVYSVFHVFEAICCVYGGVLRGTGKQAFGAAVNAITYYIIGLPLGILLTFVVRMRIMGLWLGMLACVFLATAAFVAYTARLDWKLAAEEAKKHSGRQQQQRAESTATRPGPEKAVLSSVATGSSPGITLTTYSRSECHVDFFRTPEEAHALSAPTSRLSVKQLVIRRGAALGAASATLMVGLTVRILATRH</sequence>
<reference key="1">
    <citation type="journal article" date="2006" name="J. Am. Soc. Nephrol.">
        <title>Identification and functional characterization of a new human kidney-specific H+/organic cation antiporter, kidney-specific multidrug and toxin extrusion 2.</title>
        <authorList>
            <person name="Masuda S."/>
            <person name="Terada T."/>
            <person name="Yonezawa A."/>
            <person name="Tanihara Y."/>
            <person name="Kishimoto K."/>
            <person name="Katsura T."/>
            <person name="Ogawa O."/>
            <person name="Inui K."/>
        </authorList>
    </citation>
    <scope>NUCLEOTIDE SEQUENCE [MRNA] (ISOFORMS 3 AND 6)</scope>
    <scope>TISSUE SPECIFICITY (ISOFORMS 3 AND 6)</scope>
    <scope>FUNCTION (ISOFORMS 3 AND 6)</scope>
    <scope>TRANSPORTER ACTIVITY</scope>
    <scope>BIOPHYSICOCHEMICAL PROPERTIES</scope>
    <scope>SUBCELLULAR LOCATION (ISOFORMS 3 AND 6)</scope>
    <source>
        <tissue>Brain</tissue>
        <tissue>Kidney</tissue>
    </source>
</reference>
<reference key="2">
    <citation type="journal article" date="2004" name="Nat. Genet.">
        <title>Complete sequencing and characterization of 21,243 full-length human cDNAs.</title>
        <authorList>
            <person name="Ota T."/>
            <person name="Suzuki Y."/>
            <person name="Nishikawa T."/>
            <person name="Otsuki T."/>
            <person name="Sugiyama T."/>
            <person name="Irie R."/>
            <person name="Wakamatsu A."/>
            <person name="Hayashi K."/>
            <person name="Sato H."/>
            <person name="Nagai K."/>
            <person name="Kimura K."/>
            <person name="Makita H."/>
            <person name="Sekine M."/>
            <person name="Obayashi M."/>
            <person name="Nishi T."/>
            <person name="Shibahara T."/>
            <person name="Tanaka T."/>
            <person name="Ishii S."/>
            <person name="Yamamoto J."/>
            <person name="Saito K."/>
            <person name="Kawai Y."/>
            <person name="Isono Y."/>
            <person name="Nakamura Y."/>
            <person name="Nagahari K."/>
            <person name="Murakami K."/>
            <person name="Yasuda T."/>
            <person name="Iwayanagi T."/>
            <person name="Wagatsuma M."/>
            <person name="Shiratori A."/>
            <person name="Sudo H."/>
            <person name="Hosoiri T."/>
            <person name="Kaku Y."/>
            <person name="Kodaira H."/>
            <person name="Kondo H."/>
            <person name="Sugawara M."/>
            <person name="Takahashi M."/>
            <person name="Kanda K."/>
            <person name="Yokoi T."/>
            <person name="Furuya T."/>
            <person name="Kikkawa E."/>
            <person name="Omura Y."/>
            <person name="Abe K."/>
            <person name="Kamihara K."/>
            <person name="Katsuta N."/>
            <person name="Sato K."/>
            <person name="Tanikawa M."/>
            <person name="Yamazaki M."/>
            <person name="Ninomiya K."/>
            <person name="Ishibashi T."/>
            <person name="Yamashita H."/>
            <person name="Murakawa K."/>
            <person name="Fujimori K."/>
            <person name="Tanai H."/>
            <person name="Kimata M."/>
            <person name="Watanabe M."/>
            <person name="Hiraoka S."/>
            <person name="Chiba Y."/>
            <person name="Ishida S."/>
            <person name="Ono Y."/>
            <person name="Takiguchi S."/>
            <person name="Watanabe S."/>
            <person name="Yosida M."/>
            <person name="Hotuta T."/>
            <person name="Kusano J."/>
            <person name="Kanehori K."/>
            <person name="Takahashi-Fujii A."/>
            <person name="Hara H."/>
            <person name="Tanase T.-O."/>
            <person name="Nomura Y."/>
            <person name="Togiya S."/>
            <person name="Komai F."/>
            <person name="Hara R."/>
            <person name="Takeuchi K."/>
            <person name="Arita M."/>
            <person name="Imose N."/>
            <person name="Musashino K."/>
            <person name="Yuuki H."/>
            <person name="Oshima A."/>
            <person name="Sasaki N."/>
            <person name="Aotsuka S."/>
            <person name="Yoshikawa Y."/>
            <person name="Matsunawa H."/>
            <person name="Ichihara T."/>
            <person name="Shiohata N."/>
            <person name="Sano S."/>
            <person name="Moriya S."/>
            <person name="Momiyama H."/>
            <person name="Satoh N."/>
            <person name="Takami S."/>
            <person name="Terashima Y."/>
            <person name="Suzuki O."/>
            <person name="Nakagawa S."/>
            <person name="Senoh A."/>
            <person name="Mizoguchi H."/>
            <person name="Goto Y."/>
            <person name="Shimizu F."/>
            <person name="Wakebe H."/>
            <person name="Hishigaki H."/>
            <person name="Watanabe T."/>
            <person name="Sugiyama A."/>
            <person name="Takemoto M."/>
            <person name="Kawakami B."/>
            <person name="Yamazaki M."/>
            <person name="Watanabe K."/>
            <person name="Kumagai A."/>
            <person name="Itakura S."/>
            <person name="Fukuzumi Y."/>
            <person name="Fujimori Y."/>
            <person name="Komiyama M."/>
            <person name="Tashiro H."/>
            <person name="Tanigami A."/>
            <person name="Fujiwara T."/>
            <person name="Ono T."/>
            <person name="Yamada K."/>
            <person name="Fujii Y."/>
            <person name="Ozaki K."/>
            <person name="Hirao M."/>
            <person name="Ohmori Y."/>
            <person name="Kawabata A."/>
            <person name="Hikiji T."/>
            <person name="Kobatake N."/>
            <person name="Inagaki H."/>
            <person name="Ikema Y."/>
            <person name="Okamoto S."/>
            <person name="Okitani R."/>
            <person name="Kawakami T."/>
            <person name="Noguchi S."/>
            <person name="Itoh T."/>
            <person name="Shigeta K."/>
            <person name="Senba T."/>
            <person name="Matsumura K."/>
            <person name="Nakajima Y."/>
            <person name="Mizuno T."/>
            <person name="Morinaga M."/>
            <person name="Sasaki M."/>
            <person name="Togashi T."/>
            <person name="Oyama M."/>
            <person name="Hata H."/>
            <person name="Watanabe M."/>
            <person name="Komatsu T."/>
            <person name="Mizushima-Sugano J."/>
            <person name="Satoh T."/>
            <person name="Shirai Y."/>
            <person name="Takahashi Y."/>
            <person name="Nakagawa K."/>
            <person name="Okumura K."/>
            <person name="Nagase T."/>
            <person name="Nomura N."/>
            <person name="Kikuchi H."/>
            <person name="Masuho Y."/>
            <person name="Yamashita R."/>
            <person name="Nakai K."/>
            <person name="Yada T."/>
            <person name="Nakamura Y."/>
            <person name="Ohara O."/>
            <person name="Isogai T."/>
            <person name="Sugano S."/>
        </authorList>
    </citation>
    <scope>NUCLEOTIDE SEQUENCE [LARGE SCALE MRNA] (ISOFORM 5)</scope>
    <source>
        <tissue>Kidney</tissue>
    </source>
</reference>
<reference key="3">
    <citation type="journal article" date="2007" name="BMC Genomics">
        <title>The full-ORF clone resource of the German cDNA consortium.</title>
        <authorList>
            <person name="Bechtel S."/>
            <person name="Rosenfelder H."/>
            <person name="Duda A."/>
            <person name="Schmidt C.P."/>
            <person name="Ernst U."/>
            <person name="Wellenreuther R."/>
            <person name="Mehrle A."/>
            <person name="Schuster C."/>
            <person name="Bahr A."/>
            <person name="Bloecker H."/>
            <person name="Heubner D."/>
            <person name="Hoerlein A."/>
            <person name="Michel G."/>
            <person name="Wedler H."/>
            <person name="Koehrer K."/>
            <person name="Ottenwaelder B."/>
            <person name="Poustka A."/>
            <person name="Wiemann S."/>
            <person name="Schupp I."/>
        </authorList>
    </citation>
    <scope>NUCLEOTIDE SEQUENCE [LARGE SCALE MRNA] (ISOFORM 2)</scope>
    <source>
        <tissue>Small intestine</tissue>
    </source>
</reference>
<reference key="4">
    <citation type="submission" date="2005-07" db="EMBL/GenBank/DDBJ databases">
        <authorList>
            <person name="Mural R.J."/>
            <person name="Istrail S."/>
            <person name="Sutton G.G."/>
            <person name="Florea L."/>
            <person name="Halpern A.L."/>
            <person name="Mobarry C.M."/>
            <person name="Lippert R."/>
            <person name="Walenz B."/>
            <person name="Shatkay H."/>
            <person name="Dew I."/>
            <person name="Miller J.R."/>
            <person name="Flanigan M.J."/>
            <person name="Edwards N.J."/>
            <person name="Bolanos R."/>
            <person name="Fasulo D."/>
            <person name="Halldorsson B.V."/>
            <person name="Hannenhalli S."/>
            <person name="Turner R."/>
            <person name="Yooseph S."/>
            <person name="Lu F."/>
            <person name="Nusskern D.R."/>
            <person name="Shue B.C."/>
            <person name="Zheng X.H."/>
            <person name="Zhong F."/>
            <person name="Delcher A.L."/>
            <person name="Huson D.H."/>
            <person name="Kravitz S.A."/>
            <person name="Mouchard L."/>
            <person name="Reinert K."/>
            <person name="Remington K.A."/>
            <person name="Clark A.G."/>
            <person name="Waterman M.S."/>
            <person name="Eichler E.E."/>
            <person name="Adams M.D."/>
            <person name="Hunkapiller M.W."/>
            <person name="Myers E.W."/>
            <person name="Venter J.C."/>
        </authorList>
    </citation>
    <scope>NUCLEOTIDE SEQUENCE [LARGE SCALE GENOMIC DNA]</scope>
</reference>
<reference key="5">
    <citation type="journal article" date="2004" name="Genome Res.">
        <title>The status, quality, and expansion of the NIH full-length cDNA project: the Mammalian Gene Collection (MGC).</title>
        <authorList>
            <consortium name="The MGC Project Team"/>
        </authorList>
    </citation>
    <scope>NUCLEOTIDE SEQUENCE [LARGE SCALE MRNA] (ISOFORMS 1 AND 4)</scope>
    <source>
        <tissue>Colon</tissue>
    </source>
</reference>
<reference key="6">
    <citation type="journal article" date="2006" name="J. Pharmacol. Exp. Ther.">
        <title>Cisplatin and oxaliplatin, but not carboplatin and nedaplatin, are substrates for human organic cation transporters (SLC22A1-3 and multidrug and toxin extrusion family).</title>
        <authorList>
            <person name="Yonezawa A."/>
            <person name="Masuda S."/>
            <person name="Yokoo S."/>
            <person name="Katsura T."/>
            <person name="Inui K."/>
        </authorList>
    </citation>
    <scope>FUNCTION</scope>
</reference>
<reference key="7">
    <citation type="journal article" date="2007" name="Biochem. Pharmacol.">
        <title>Substrate specificity of MATE1 and MATE2-K, human multidrug and toxin extrusions/H(+)-organic cation antiporters.</title>
        <authorList>
            <person name="Tanihara Y."/>
            <person name="Masuda S."/>
            <person name="Sato T."/>
            <person name="Katsura T."/>
            <person name="Ogawa O."/>
            <person name="Inui K."/>
        </authorList>
    </citation>
    <scope>FUNCTION</scope>
    <scope>TRANSPORTER ACTIVITY</scope>
    <scope>BIOPHYSICOCHEMICAL PROPERTIES</scope>
    <scope>SUBSTRATE SPECIFICITY</scope>
</reference>
<reference key="8">
    <citation type="journal article" date="2009" name="J. Hum. Genet.">
        <title>Identification of multidrug and toxin extrusion (MATE1 and MATE2-K) variants with complete loss of transport activity.</title>
        <authorList>
            <person name="Kajiwara M."/>
            <person name="Terada T."/>
            <person name="Ogasawara K."/>
            <person name="Iwano J."/>
            <person name="Katsura T."/>
            <person name="Fukatsu A."/>
            <person name="Doi T."/>
            <person name="Inui K."/>
        </authorList>
    </citation>
    <scope>FUNCTION</scope>
    <scope>TRANSPORTER ACTIVITY</scope>
    <scope>BIOPHYSICOCHEMICAL PROPERTIES</scope>
    <scope>SUBCELLULAR LOCATION</scope>
    <scope>VARIANTS ASN-64 AND VAL-247</scope>
    <scope>CHARACTERIZATION OF VARIANTS ASN-64 AND VAL-247</scope>
</reference>
<reference key="9">
    <citation type="journal article" date="2011" name="Int. J. Biochem. Cell Biol.">
        <title>Characterization of the human MATE2 proton-coupled polyspecific organic cation exporter.</title>
        <authorList>
            <person name="Komatsu T."/>
            <person name="Hiasa M."/>
            <person name="Miyaji T."/>
            <person name="Kanamoto T."/>
            <person name="Matsumoto T."/>
            <person name="Otsuka M."/>
            <person name="Moriyama Y."/>
            <person name="Omote H."/>
        </authorList>
    </citation>
    <scope>FUNCTION</scope>
    <scope>TISSUE SPECIFICITY</scope>
    <scope>TRANSPORTER ACTIVITY</scope>
</reference>
<gene>
    <name evidence="13" type="primary">SLC47A2</name>
    <name type="synonym">MATE2</name>
</gene>
<organism>
    <name type="scientific">Homo sapiens</name>
    <name type="common">Human</name>
    <dbReference type="NCBI Taxonomy" id="9606"/>
    <lineage>
        <taxon>Eukaryota</taxon>
        <taxon>Metazoa</taxon>
        <taxon>Chordata</taxon>
        <taxon>Craniata</taxon>
        <taxon>Vertebrata</taxon>
        <taxon>Euteleostomi</taxon>
        <taxon>Mammalia</taxon>
        <taxon>Eutheria</taxon>
        <taxon>Euarchontoglires</taxon>
        <taxon>Primates</taxon>
        <taxon>Haplorrhini</taxon>
        <taxon>Catarrhini</taxon>
        <taxon>Hominidae</taxon>
        <taxon>Homo</taxon>
    </lineage>
</organism>
<feature type="chain" id="PRO_0000311952" description="Multidrug and toxin extrusion protein 2">
    <location>
        <begin position="1"/>
        <end position="602"/>
    </location>
</feature>
<feature type="topological domain" description="Cytoplasmic" evidence="1">
    <location>
        <begin position="1"/>
        <end position="33"/>
    </location>
</feature>
<feature type="transmembrane region" description="Helical" evidence="1">
    <location>
        <begin position="34"/>
        <end position="54"/>
    </location>
</feature>
<feature type="topological domain" description="Extracellular" evidence="1">
    <location>
        <begin position="55"/>
        <end position="66"/>
    </location>
</feature>
<feature type="transmembrane region" description="Helical" evidence="1">
    <location>
        <begin position="67"/>
        <end position="87"/>
    </location>
</feature>
<feature type="topological domain" description="Cytoplasmic" evidence="1">
    <location>
        <begin position="88"/>
        <end position="119"/>
    </location>
</feature>
<feature type="transmembrane region" description="Helical" evidence="1">
    <location>
        <begin position="120"/>
        <end position="140"/>
    </location>
</feature>
<feature type="topological domain" description="Extracellular" evidence="1">
    <location>
        <begin position="141"/>
        <end position="153"/>
    </location>
</feature>
<feature type="transmembrane region" description="Helical" evidence="1">
    <location>
        <begin position="154"/>
        <end position="174"/>
    </location>
</feature>
<feature type="topological domain" description="Cytoplasmic" evidence="1">
    <location>
        <begin position="175"/>
        <end position="219"/>
    </location>
</feature>
<feature type="transmembrane region" description="Helical" evidence="1">
    <location>
        <begin position="220"/>
        <end position="240"/>
    </location>
</feature>
<feature type="topological domain" description="Extracellular" evidence="1">
    <location>
        <begin position="241"/>
        <end position="248"/>
    </location>
</feature>
<feature type="transmembrane region" description="Helical" evidence="1">
    <location>
        <begin position="249"/>
        <end position="269"/>
    </location>
</feature>
<feature type="topological domain" description="Cytoplasmic" evidence="1">
    <location>
        <begin position="270"/>
        <end position="289"/>
    </location>
</feature>
<feature type="transmembrane region" description="Helical" evidence="1">
    <location>
        <begin position="290"/>
        <end position="309"/>
    </location>
</feature>
<feature type="topological domain" description="Extracellular" evidence="1">
    <location>
        <begin position="310"/>
        <end position="327"/>
    </location>
</feature>
<feature type="transmembrane region" description="Helical" evidence="1">
    <location>
        <begin position="328"/>
        <end position="348"/>
    </location>
</feature>
<feature type="topological domain" description="Cytoplasmic" evidence="1">
    <location>
        <begin position="349"/>
        <end position="368"/>
    </location>
</feature>
<feature type="transmembrane region" description="Helical" evidence="1">
    <location>
        <begin position="369"/>
        <end position="389"/>
    </location>
</feature>
<feature type="topological domain" description="Extracellular" evidence="1">
    <location>
        <begin position="390"/>
        <end position="402"/>
    </location>
</feature>
<feature type="transmembrane region" description="Helical" evidence="1">
    <location>
        <begin position="403"/>
        <end position="423"/>
    </location>
</feature>
<feature type="topological domain" description="Cytoplasmic" evidence="1">
    <location>
        <begin position="424"/>
        <end position="442"/>
    </location>
</feature>
<feature type="transmembrane region" description="Helical" evidence="1">
    <location>
        <begin position="443"/>
        <end position="463"/>
    </location>
</feature>
<feature type="topological domain" description="Extracellular" evidence="1">
    <location>
        <begin position="464"/>
        <end position="466"/>
    </location>
</feature>
<feature type="transmembrane region" description="Helical" evidence="1">
    <location>
        <begin position="467"/>
        <end position="487"/>
    </location>
</feature>
<feature type="topological domain" description="Cytoplasmic" evidence="1">
    <location>
        <begin position="488"/>
        <end position="578"/>
    </location>
</feature>
<feature type="transmembrane region" description="Helical" evidence="1">
    <location>
        <begin position="579"/>
        <end position="599"/>
    </location>
</feature>
<feature type="topological domain" description="Extracellular" evidence="1">
    <location>
        <begin position="600"/>
        <end position="602"/>
    </location>
</feature>
<feature type="region of interest" description="Disordered" evidence="2">
    <location>
        <begin position="503"/>
        <end position="529"/>
    </location>
</feature>
<feature type="compositionally biased region" description="Polar residues" evidence="2">
    <location>
        <begin position="507"/>
        <end position="518"/>
    </location>
</feature>
<feature type="splice variant" id="VSP_029656" description="In isoform 2." evidence="11">
    <location>
        <begin position="1"/>
        <end position="49"/>
    </location>
</feature>
<feature type="splice variant" id="VSP_029657" description="In isoform 6." evidence="10">
    <original>GWLKGQEEESPFQTPGLSILHPSHSHLSRASFHLFQKITWPQ</original>
    <variation>AGERLCVPASSNSSTGMAEGAGGGVPIPNPGFVHPPSISLTP</variation>
    <location>
        <begin position="178"/>
        <end position="219"/>
    </location>
</feature>
<feature type="splice variant" id="VSP_029658" description="In isoform 2, isoform 3, isoform 4 and isoform 5." evidence="8 9 10 11">
    <location>
        <begin position="178"/>
        <end position="213"/>
    </location>
</feature>
<feature type="splice variant" id="VSP_029659" description="In isoform 6." evidence="10">
    <location>
        <begin position="220"/>
        <end position="602"/>
    </location>
</feature>
<feature type="splice variant" id="VSP_029660" description="In isoform 5." evidence="8">
    <original>GLLSVVDLSAQAVIYEVATVTYMIPLGLSIGVCVRVGMALGAADTVQAKRSAVSGVLSIVGISLVLGTLISILKNQLGHIFT</original>
    <variation>EHAQCGGSLCPGCHLGGHCDLHDSLGAQHRGLCPSGDGSGGRGYCAGQALGRLGRAQHSWHFPGPGHPDKHPEKSAGAYFYQ</variation>
    <location>
        <begin position="317"/>
        <end position="398"/>
    </location>
</feature>
<feature type="splice variant" id="VSP_029662" description="In isoform 4." evidence="9">
    <original>M</original>
    <variation>MRHSHRLAYAAHVTR</variation>
    <location>
        <position position="339"/>
    </location>
</feature>
<feature type="splice variant" id="VSP_029663" description="In isoform 2." evidence="11">
    <original>VGISLV</original>
    <variation>EMSLPW</variation>
    <location>
        <begin position="376"/>
        <end position="381"/>
    </location>
</feature>
<feature type="splice variant" id="VSP_029664" description="In isoform 2." evidence="11">
    <location>
        <begin position="382"/>
        <end position="602"/>
    </location>
</feature>
<feature type="splice variant" id="VSP_029661" description="In isoform 5." evidence="8">
    <location>
        <begin position="399"/>
        <end position="602"/>
    </location>
</feature>
<feature type="sequence variant" id="VAR_086946" description="Found in a patient with renal disease; uncertain significance; abolishes TEA transport activity; decreases plasma membrane localization." evidence="6">
    <original>K</original>
    <variation>N</variation>
    <location>
        <position position="64"/>
    </location>
</feature>
<feature type="sequence variant" id="VAR_086947" description="Found in a patient with renal disease; uncertain significance; abolishes plasma membrane localization; dbSNP:rs562968062." evidence="6">
    <original>G</original>
    <variation>V</variation>
    <location>
        <position position="247"/>
    </location>
</feature>
<feature type="sequence variant" id="VAR_037358" description="In dbSNP:rs34399035.">
    <original>G</original>
    <variation>R</variation>
    <location>
        <position position="429"/>
    </location>
</feature>
<feature type="sequence conflict" description="In Ref. 1; BAF37007." evidence="12" ref="1">
    <original>D</original>
    <variation>E</variation>
    <location>
        <position position="6"/>
    </location>
</feature>
<feature type="sequence conflict" description="In Ref. 2; AK055758." evidence="12" ref="2">
    <original>V</original>
    <variation>A</variation>
    <location>
        <position position="23"/>
    </location>
</feature>
<feature type="sequence conflict" description="In Ref. 2; AK055758." evidence="12" ref="2">
    <original>D</original>
    <variation>G</variation>
    <location>
        <position position="93"/>
    </location>
</feature>
<feature type="sequence conflict" description="In Ref. 3; CAH56154." evidence="12" ref="3">
    <original>C</original>
    <variation>Y</variation>
    <location>
        <position position="284"/>
    </location>
</feature>
<evidence type="ECO:0000255" key="1"/>
<evidence type="ECO:0000256" key="2">
    <source>
        <dbReference type="SAM" id="MobiDB-lite"/>
    </source>
</evidence>
<evidence type="ECO:0000269" key="3">
    <source>
    </source>
</evidence>
<evidence type="ECO:0000269" key="4">
    <source>
    </source>
</evidence>
<evidence type="ECO:0000269" key="5">
    <source>
    </source>
</evidence>
<evidence type="ECO:0000269" key="6">
    <source>
    </source>
</evidence>
<evidence type="ECO:0000269" key="7">
    <source>
    </source>
</evidence>
<evidence type="ECO:0000303" key="8">
    <source>
    </source>
</evidence>
<evidence type="ECO:0000303" key="9">
    <source>
    </source>
</evidence>
<evidence type="ECO:0000303" key="10">
    <source>
    </source>
</evidence>
<evidence type="ECO:0000303" key="11">
    <source>
    </source>
</evidence>
<evidence type="ECO:0000305" key="12"/>
<evidence type="ECO:0000312" key="13">
    <source>
        <dbReference type="HGNC" id="HGNC:26439"/>
    </source>
</evidence>
<comment type="function">
    <text evidence="3 4 5 6 7">Multidrug efflux pump that functions as a H(+)/organic cation antiporter. Mediates the efflux of cationic compounds, such as the model cations, tetraethylammonium (TEA) and 1-methyl-4-phenylpyridinium (MPP+), the platinum-based drug oxaliplatin or weak bases that are positively charged at physiological pH, cimetidine, the platinum-based drugs cisplatin and oxaliplatin or the antidiabetic drug metformin. Mediates the efflux of endogenous compounds such as, creatinine, thiamine and estrone-3-sulfate. Plays a physiological role in the excretion of drugs, toxins and endogenous metabolites through the kidney.</text>
</comment>
<comment type="function">
    <molecule>Isoform 6</molecule>
    <text evidence="3">Non-functional protein.</text>
</comment>
<comment type="catalytic activity">
    <reaction evidence="5">
        <text>thiamine(out) + H(+)(in) = thiamine(in) + H(+)(out)</text>
        <dbReference type="Rhea" id="RHEA:71271"/>
        <dbReference type="ChEBI" id="CHEBI:15378"/>
        <dbReference type="ChEBI" id="CHEBI:18385"/>
    </reaction>
</comment>
<comment type="catalytic activity">
    <reaction evidence="5">
        <text>estrone 3-sulfate(in) + H(+)(out) = estrone 3-sulfate(out) + H(+)(in)</text>
        <dbReference type="Rhea" id="RHEA:72139"/>
        <dbReference type="ChEBI" id="CHEBI:15378"/>
        <dbReference type="ChEBI" id="CHEBI:60050"/>
    </reaction>
</comment>
<comment type="catalytic activity">
    <reaction evidence="5">
        <text>creatinine(in) + H(+)(out) = creatinine(out) + H(+)(in)</text>
        <dbReference type="Rhea" id="RHEA:72183"/>
        <dbReference type="ChEBI" id="CHEBI:15378"/>
        <dbReference type="ChEBI" id="CHEBI:16737"/>
    </reaction>
</comment>
<comment type="biophysicochemical properties">
    <kinetics>
        <KM evidence="3 5">0.76 mM for TEA</KM>
        <KM evidence="6">1.39 mM for TEA</KM>
        <KM evidence="3 5">0.11 mM for MPP</KM>
        <KM evidence="3 5">0.12 mM for cimetidine</KM>
        <KM evidence="3 5">1.98 mM for metformin</KM>
        <KM evidence="3 5">4.2 mM for guanidine</KM>
        <KM evidence="3 5">1.58 mM for procainamide</KM>
        <KM evidence="3 5">0.06 mM for topotecan</KM>
        <KM evidence="3 5">0.85 mM for estrone sulfate</KM>
        <KM evidence="3 5">4.32 mM for acyclovir</KM>
        <KM evidence="3 5">4.28 mM for ganciclovir</KM>
        <Vmax evidence="3 5">0.88 nmol/min/mg enzyme toward TEA</Vmax>
        <Vmax evidence="3 5">0.575 nmol/min/mg enzyme toward MPP</Vmax>
        <Vmax evidence="3 5">0.115 nmol/min/mg enzyme toward cimetidine</Vmax>
        <Vmax evidence="3 5">0.845 nmol/min/mg enzyme toward metformin</Vmax>
        <Vmax evidence="3 5">0.58 nmol/min/mg enzyme toward guanidine</Vmax>
        <Vmax evidence="3 5">3.385 nmol/min/mg enzyme toward procainamide</Vmax>
        <Vmax evidence="3 5">0.13 nmol/min/mg enzyme toward topotecan</Vmax>
        <Vmax evidence="3 5">0.425 nmol/min/mg enzyme toward estrone sulfate</Vmax>
        <Vmax evidence="3 5">0.945 nmol/min/mg enzyme toward acyclovir</Vmax>
        <Vmax evidence="3 5">0.805 nmol/min/mg enzyme toward ganciclovir</Vmax>
    </kinetics>
    <phDependence>
        <text evidence="3 5">Optimum pH is 9.0. Active from pH 6 to 9.</text>
    </phDependence>
</comment>
<comment type="subcellular location">
    <subcellularLocation>
        <location evidence="6">Cell membrane</location>
        <topology evidence="1">Multi-pass membrane protein</topology>
    </subcellularLocation>
    <subcellularLocation>
        <location evidence="3 7">Apical cell membrane</location>
        <topology evidence="1">Multi-pass membrane protein</topology>
    </subcellularLocation>
    <text evidence="7">Detected in the renal urinary tubules.</text>
</comment>
<comment type="subcellular location">
    <molecule>Isoform 6</molecule>
    <subcellularLocation>
        <location evidence="3">Apical cell membrane</location>
        <topology evidence="1">Multi-pass membrane protein</topology>
    </subcellularLocation>
    <text evidence="3">Localized at the brush border membranes of the proximal tubules.</text>
</comment>
<comment type="alternative products">
    <event type="alternative splicing"/>
    <isoform>
        <id>Q86VL8-1</id>
        <name>1</name>
        <sequence type="displayed"/>
    </isoform>
    <isoform>
        <id>Q86VL8-2</id>
        <name>2</name>
        <sequence type="described" ref="VSP_029656 VSP_029658 VSP_029663 VSP_029664"/>
    </isoform>
    <isoform>
        <id>Q86VL8-3</id>
        <name>3</name>
        <name evidence="10">MATE2-K</name>
        <sequence type="described" ref="VSP_029658"/>
    </isoform>
    <isoform>
        <id>Q86VL8-4</id>
        <name>4</name>
        <sequence type="described" ref="VSP_029658 VSP_029662"/>
    </isoform>
    <isoform>
        <id>Q86VL8-5</id>
        <name>5</name>
        <sequence type="described" ref="VSP_029658 VSP_029660 VSP_029661"/>
    </isoform>
    <isoform>
        <id>Q86VL8-6</id>
        <name>6</name>
        <name evidence="10">MATE2-B</name>
        <sequence type="described" ref="VSP_029657 VSP_029659"/>
    </isoform>
</comment>
<comment type="tissue specificity">
    <molecule>Isoform 1</molecule>
    <text evidence="3 7">High expression in kidney. Very small expression in adrenal gland and lung.</text>
</comment>
<comment type="tissue specificity">
    <molecule>Isoform 3</molecule>
    <text evidence="3 7">High expression in kidney. Very small expression in brain and testis.</text>
</comment>
<comment type="tissue specificity">
    <molecule>Isoform 6</molecule>
    <text evidence="3">Ubiquitously expressed in all tissues examined except the kidney.</text>
</comment>
<comment type="similarity">
    <text evidence="12">Belongs to the multi antimicrobial extrusion (MATE) (TC 2.A.66.1) family.</text>
</comment>